<dbReference type="EMBL" id="AM295007">
    <property type="protein sequence ID" value="CAM29405.1"/>
    <property type="molecule type" value="Genomic_DNA"/>
</dbReference>
<dbReference type="RefSeq" id="WP_002986622.1">
    <property type="nucleotide sequence ID" value="NC_009332.1"/>
</dbReference>
<dbReference type="SMR" id="A2RC33"/>
<dbReference type="GeneID" id="69900045"/>
<dbReference type="KEGG" id="spf:SpyM50063"/>
<dbReference type="HOGENOM" id="CLU_055188_4_2_9"/>
<dbReference type="GO" id="GO:0022625">
    <property type="term" value="C:cytosolic large ribosomal subunit"/>
    <property type="evidence" value="ECO:0007669"/>
    <property type="project" value="TreeGrafter"/>
</dbReference>
<dbReference type="GO" id="GO:0019843">
    <property type="term" value="F:rRNA binding"/>
    <property type="evidence" value="ECO:0007669"/>
    <property type="project" value="UniProtKB-UniRule"/>
</dbReference>
<dbReference type="GO" id="GO:0003735">
    <property type="term" value="F:structural constituent of ribosome"/>
    <property type="evidence" value="ECO:0007669"/>
    <property type="project" value="InterPro"/>
</dbReference>
<dbReference type="GO" id="GO:0006412">
    <property type="term" value="P:translation"/>
    <property type="evidence" value="ECO:0007669"/>
    <property type="project" value="UniProtKB-UniRule"/>
</dbReference>
<dbReference type="Gene3D" id="3.100.10.10">
    <property type="match status" value="1"/>
</dbReference>
<dbReference type="HAMAP" id="MF_01341">
    <property type="entry name" value="Ribosomal_uL15"/>
    <property type="match status" value="1"/>
</dbReference>
<dbReference type="InterPro" id="IPR030878">
    <property type="entry name" value="Ribosomal_uL15"/>
</dbReference>
<dbReference type="InterPro" id="IPR021131">
    <property type="entry name" value="Ribosomal_uL15/eL18"/>
</dbReference>
<dbReference type="InterPro" id="IPR036227">
    <property type="entry name" value="Ribosomal_uL15/eL18_sf"/>
</dbReference>
<dbReference type="InterPro" id="IPR005749">
    <property type="entry name" value="Ribosomal_uL15_bac-type"/>
</dbReference>
<dbReference type="InterPro" id="IPR001196">
    <property type="entry name" value="Ribosomal_uL15_CS"/>
</dbReference>
<dbReference type="NCBIfam" id="TIGR01071">
    <property type="entry name" value="rplO_bact"/>
    <property type="match status" value="1"/>
</dbReference>
<dbReference type="PANTHER" id="PTHR12934">
    <property type="entry name" value="50S RIBOSOMAL PROTEIN L15"/>
    <property type="match status" value="1"/>
</dbReference>
<dbReference type="PANTHER" id="PTHR12934:SF11">
    <property type="entry name" value="LARGE RIBOSOMAL SUBUNIT PROTEIN UL15M"/>
    <property type="match status" value="1"/>
</dbReference>
<dbReference type="Pfam" id="PF00828">
    <property type="entry name" value="Ribosomal_L27A"/>
    <property type="match status" value="1"/>
</dbReference>
<dbReference type="SUPFAM" id="SSF52080">
    <property type="entry name" value="Ribosomal proteins L15p and L18e"/>
    <property type="match status" value="1"/>
</dbReference>
<dbReference type="PROSITE" id="PS00475">
    <property type="entry name" value="RIBOSOMAL_L15"/>
    <property type="match status" value="1"/>
</dbReference>
<evidence type="ECO:0000255" key="1">
    <source>
        <dbReference type="HAMAP-Rule" id="MF_01341"/>
    </source>
</evidence>
<evidence type="ECO:0000256" key="2">
    <source>
        <dbReference type="SAM" id="MobiDB-lite"/>
    </source>
</evidence>
<evidence type="ECO:0000305" key="3"/>
<protein>
    <recommendedName>
        <fullName evidence="1">Large ribosomal subunit protein uL15</fullName>
    </recommendedName>
    <alternativeName>
        <fullName evidence="3">50S ribosomal protein L15</fullName>
    </alternativeName>
</protein>
<sequence length="146" mass="15421">MKLHELKAAEGSRKVRNRVGRGTSSGNGKTSGRGQKGQKARSGGGVRLGFEGGQTPLFRRIPKRGFTNINTKEYALVNLDQLNVFDDGTEVTPAILKDAGIVRAEKSGVKVLGNGELTKKLTVKAAKFSKSAEAAIIAKGGSIEVI</sequence>
<reference key="1">
    <citation type="journal article" date="2007" name="J. Bacteriol.">
        <title>Complete genome of acute rheumatic fever-associated serotype M5 Streptococcus pyogenes strain Manfredo.</title>
        <authorList>
            <person name="Holden M.T.G."/>
            <person name="Scott A."/>
            <person name="Cherevach I."/>
            <person name="Chillingworth T."/>
            <person name="Churcher C."/>
            <person name="Cronin A."/>
            <person name="Dowd L."/>
            <person name="Feltwell T."/>
            <person name="Hamlin N."/>
            <person name="Holroyd S."/>
            <person name="Jagels K."/>
            <person name="Moule S."/>
            <person name="Mungall K."/>
            <person name="Quail M.A."/>
            <person name="Price C."/>
            <person name="Rabbinowitsch E."/>
            <person name="Sharp S."/>
            <person name="Skelton J."/>
            <person name="Whitehead S."/>
            <person name="Barrell B.G."/>
            <person name="Kehoe M."/>
            <person name="Parkhill J."/>
        </authorList>
    </citation>
    <scope>NUCLEOTIDE SEQUENCE [LARGE SCALE GENOMIC DNA]</scope>
    <source>
        <strain>Manfredo</strain>
    </source>
</reference>
<name>RL15_STRPG</name>
<feature type="chain" id="PRO_1000054552" description="Large ribosomal subunit protein uL15">
    <location>
        <begin position="1"/>
        <end position="146"/>
    </location>
</feature>
<feature type="region of interest" description="Disordered" evidence="2">
    <location>
        <begin position="1"/>
        <end position="51"/>
    </location>
</feature>
<feature type="compositionally biased region" description="Basic and acidic residues" evidence="2">
    <location>
        <begin position="1"/>
        <end position="13"/>
    </location>
</feature>
<feature type="compositionally biased region" description="Gly residues" evidence="2">
    <location>
        <begin position="23"/>
        <end position="35"/>
    </location>
</feature>
<feature type="compositionally biased region" description="Gly residues" evidence="2">
    <location>
        <begin position="42"/>
        <end position="51"/>
    </location>
</feature>
<gene>
    <name evidence="1" type="primary">rplO</name>
    <name type="ordered locus">SpyM50063</name>
</gene>
<keyword id="KW-0687">Ribonucleoprotein</keyword>
<keyword id="KW-0689">Ribosomal protein</keyword>
<keyword id="KW-0694">RNA-binding</keyword>
<keyword id="KW-0699">rRNA-binding</keyword>
<comment type="function">
    <text evidence="1">Binds to the 23S rRNA.</text>
</comment>
<comment type="subunit">
    <text evidence="1">Part of the 50S ribosomal subunit.</text>
</comment>
<comment type="similarity">
    <text evidence="1">Belongs to the universal ribosomal protein uL15 family.</text>
</comment>
<organism>
    <name type="scientific">Streptococcus pyogenes serotype M5 (strain Manfredo)</name>
    <dbReference type="NCBI Taxonomy" id="160491"/>
    <lineage>
        <taxon>Bacteria</taxon>
        <taxon>Bacillati</taxon>
        <taxon>Bacillota</taxon>
        <taxon>Bacilli</taxon>
        <taxon>Lactobacillales</taxon>
        <taxon>Streptococcaceae</taxon>
        <taxon>Streptococcus</taxon>
    </lineage>
</organism>
<proteinExistence type="inferred from homology"/>
<accession>A2RC33</accession>